<dbReference type="EC" id="2.1.1.182" evidence="1"/>
<dbReference type="EMBL" id="CU928145">
    <property type="protein sequence ID" value="CAU95938.1"/>
    <property type="molecule type" value="Genomic_DNA"/>
</dbReference>
<dbReference type="RefSeq" id="WP_001065373.1">
    <property type="nucleotide sequence ID" value="NC_011748.1"/>
</dbReference>
<dbReference type="SMR" id="B7L4H4"/>
<dbReference type="KEGG" id="eck:EC55989_0051"/>
<dbReference type="HOGENOM" id="CLU_041220_0_1_6"/>
<dbReference type="Proteomes" id="UP000000746">
    <property type="component" value="Chromosome"/>
</dbReference>
<dbReference type="GO" id="GO:0005829">
    <property type="term" value="C:cytosol"/>
    <property type="evidence" value="ECO:0007669"/>
    <property type="project" value="TreeGrafter"/>
</dbReference>
<dbReference type="GO" id="GO:0052908">
    <property type="term" value="F:16S rRNA (adenine(1518)-N(6)/adenine(1519)-N(6))-dimethyltransferase activity"/>
    <property type="evidence" value="ECO:0007669"/>
    <property type="project" value="UniProtKB-EC"/>
</dbReference>
<dbReference type="GO" id="GO:0003723">
    <property type="term" value="F:RNA binding"/>
    <property type="evidence" value="ECO:0007669"/>
    <property type="project" value="UniProtKB-KW"/>
</dbReference>
<dbReference type="FunFam" id="1.10.8.100:FF:000001">
    <property type="entry name" value="Ribosomal RNA small subunit methyltransferase A"/>
    <property type="match status" value="1"/>
</dbReference>
<dbReference type="FunFam" id="3.40.50.150:FF:000006">
    <property type="entry name" value="Ribosomal RNA small subunit methyltransferase A"/>
    <property type="match status" value="1"/>
</dbReference>
<dbReference type="Gene3D" id="1.10.8.100">
    <property type="entry name" value="Ribosomal RNA adenine dimethylase-like, domain 2"/>
    <property type="match status" value="1"/>
</dbReference>
<dbReference type="Gene3D" id="3.40.50.150">
    <property type="entry name" value="Vaccinia Virus protein VP39"/>
    <property type="match status" value="1"/>
</dbReference>
<dbReference type="HAMAP" id="MF_00607">
    <property type="entry name" value="16SrRNA_methyltr_A"/>
    <property type="match status" value="1"/>
</dbReference>
<dbReference type="InterPro" id="IPR001737">
    <property type="entry name" value="KsgA/Erm"/>
</dbReference>
<dbReference type="InterPro" id="IPR023165">
    <property type="entry name" value="rRNA_Ade_diMease-like_C"/>
</dbReference>
<dbReference type="InterPro" id="IPR020596">
    <property type="entry name" value="rRNA_Ade_Mease_Trfase_CS"/>
</dbReference>
<dbReference type="InterPro" id="IPR020598">
    <property type="entry name" value="rRNA_Ade_methylase_Trfase_N"/>
</dbReference>
<dbReference type="InterPro" id="IPR011530">
    <property type="entry name" value="rRNA_adenine_dimethylase"/>
</dbReference>
<dbReference type="InterPro" id="IPR029063">
    <property type="entry name" value="SAM-dependent_MTases_sf"/>
</dbReference>
<dbReference type="NCBIfam" id="TIGR00755">
    <property type="entry name" value="ksgA"/>
    <property type="match status" value="1"/>
</dbReference>
<dbReference type="PANTHER" id="PTHR11727">
    <property type="entry name" value="DIMETHYLADENOSINE TRANSFERASE"/>
    <property type="match status" value="1"/>
</dbReference>
<dbReference type="PANTHER" id="PTHR11727:SF7">
    <property type="entry name" value="DIMETHYLADENOSINE TRANSFERASE-RELATED"/>
    <property type="match status" value="1"/>
</dbReference>
<dbReference type="Pfam" id="PF00398">
    <property type="entry name" value="RrnaAD"/>
    <property type="match status" value="1"/>
</dbReference>
<dbReference type="SMART" id="SM00650">
    <property type="entry name" value="rADc"/>
    <property type="match status" value="1"/>
</dbReference>
<dbReference type="SUPFAM" id="SSF53335">
    <property type="entry name" value="S-adenosyl-L-methionine-dependent methyltransferases"/>
    <property type="match status" value="1"/>
</dbReference>
<dbReference type="PROSITE" id="PS01131">
    <property type="entry name" value="RRNA_A_DIMETH"/>
    <property type="match status" value="1"/>
</dbReference>
<dbReference type="PROSITE" id="PS51689">
    <property type="entry name" value="SAM_RNA_A_N6_MT"/>
    <property type="match status" value="1"/>
</dbReference>
<gene>
    <name evidence="1" type="primary">rsmA</name>
    <name evidence="1" type="synonym">ksgA</name>
    <name type="ordered locus">EC55989_0051</name>
</gene>
<reference key="1">
    <citation type="journal article" date="2009" name="PLoS Genet.">
        <title>Organised genome dynamics in the Escherichia coli species results in highly diverse adaptive paths.</title>
        <authorList>
            <person name="Touchon M."/>
            <person name="Hoede C."/>
            <person name="Tenaillon O."/>
            <person name="Barbe V."/>
            <person name="Baeriswyl S."/>
            <person name="Bidet P."/>
            <person name="Bingen E."/>
            <person name="Bonacorsi S."/>
            <person name="Bouchier C."/>
            <person name="Bouvet O."/>
            <person name="Calteau A."/>
            <person name="Chiapello H."/>
            <person name="Clermont O."/>
            <person name="Cruveiller S."/>
            <person name="Danchin A."/>
            <person name="Diard M."/>
            <person name="Dossat C."/>
            <person name="Karoui M.E."/>
            <person name="Frapy E."/>
            <person name="Garry L."/>
            <person name="Ghigo J.M."/>
            <person name="Gilles A.M."/>
            <person name="Johnson J."/>
            <person name="Le Bouguenec C."/>
            <person name="Lescat M."/>
            <person name="Mangenot S."/>
            <person name="Martinez-Jehanne V."/>
            <person name="Matic I."/>
            <person name="Nassif X."/>
            <person name="Oztas S."/>
            <person name="Petit M.A."/>
            <person name="Pichon C."/>
            <person name="Rouy Z."/>
            <person name="Ruf C.S."/>
            <person name="Schneider D."/>
            <person name="Tourret J."/>
            <person name="Vacherie B."/>
            <person name="Vallenet D."/>
            <person name="Medigue C."/>
            <person name="Rocha E.P.C."/>
            <person name="Denamur E."/>
        </authorList>
    </citation>
    <scope>NUCLEOTIDE SEQUENCE [LARGE SCALE GENOMIC DNA]</scope>
    <source>
        <strain>55989 / EAEC</strain>
    </source>
</reference>
<accession>B7L4H4</accession>
<keyword id="KW-0963">Cytoplasm</keyword>
<keyword id="KW-0489">Methyltransferase</keyword>
<keyword id="KW-1185">Reference proteome</keyword>
<keyword id="KW-0694">RNA-binding</keyword>
<keyword id="KW-0698">rRNA processing</keyword>
<keyword id="KW-0949">S-adenosyl-L-methionine</keyword>
<keyword id="KW-0808">Transferase</keyword>
<sequence length="273" mass="30392">MNNRVHQGHLARKRFGQNFLNDQFVIDSIVSAINPQKGQAMVEIGPGLAALTEPVGERLDQLTVIELDRDLAARLQTHPFLGPKLTIYQQDAMTFNFGELAEKMGQPLRVFGNLPYNISTPLMFHLFSYTDAIADMHFMLQKEVVNRLVAGPNSKAYGRLSVMAQYYCNVIPVLEVPPSAFTPPPKVDSAVVRLVPHATMPHPVKDVRVLSRITTEAFNQRRKTIRNSLGNLFSAEVLTGMGIDPAMRAENISVAQYCQMANYLAENAPLQES</sequence>
<name>RSMA_ECO55</name>
<protein>
    <recommendedName>
        <fullName evidence="1">Ribosomal RNA small subunit methyltransferase A</fullName>
        <ecNumber evidence="1">2.1.1.182</ecNumber>
    </recommendedName>
    <alternativeName>
        <fullName evidence="1">16S rRNA (adenine(1518)-N(6)/adenine(1519)-N(6))-dimethyltransferase</fullName>
    </alternativeName>
    <alternativeName>
        <fullName evidence="1">16S rRNA dimethyladenosine transferase</fullName>
    </alternativeName>
    <alternativeName>
        <fullName evidence="1">16S rRNA dimethylase</fullName>
    </alternativeName>
    <alternativeName>
        <fullName evidence="1">S-adenosylmethionine-6-N', N'-adenosyl(rRNA) dimethyltransferase</fullName>
    </alternativeName>
</protein>
<evidence type="ECO:0000255" key="1">
    <source>
        <dbReference type="HAMAP-Rule" id="MF_00607"/>
    </source>
</evidence>
<organism>
    <name type="scientific">Escherichia coli (strain 55989 / EAEC)</name>
    <dbReference type="NCBI Taxonomy" id="585055"/>
    <lineage>
        <taxon>Bacteria</taxon>
        <taxon>Pseudomonadati</taxon>
        <taxon>Pseudomonadota</taxon>
        <taxon>Gammaproteobacteria</taxon>
        <taxon>Enterobacterales</taxon>
        <taxon>Enterobacteriaceae</taxon>
        <taxon>Escherichia</taxon>
    </lineage>
</organism>
<proteinExistence type="inferred from homology"/>
<feature type="chain" id="PRO_1000194381" description="Ribosomal RNA small subunit methyltransferase A">
    <location>
        <begin position="1"/>
        <end position="273"/>
    </location>
</feature>
<feature type="binding site" evidence="1">
    <location>
        <position position="18"/>
    </location>
    <ligand>
        <name>S-adenosyl-L-methionine</name>
        <dbReference type="ChEBI" id="CHEBI:59789"/>
    </ligand>
</feature>
<feature type="binding site" evidence="1">
    <location>
        <position position="20"/>
    </location>
    <ligand>
        <name>S-adenosyl-L-methionine</name>
        <dbReference type="ChEBI" id="CHEBI:59789"/>
    </ligand>
</feature>
<feature type="binding site" evidence="1">
    <location>
        <position position="45"/>
    </location>
    <ligand>
        <name>S-adenosyl-L-methionine</name>
        <dbReference type="ChEBI" id="CHEBI:59789"/>
    </ligand>
</feature>
<feature type="binding site" evidence="1">
    <location>
        <position position="66"/>
    </location>
    <ligand>
        <name>S-adenosyl-L-methionine</name>
        <dbReference type="ChEBI" id="CHEBI:59789"/>
    </ligand>
</feature>
<feature type="binding site" evidence="1">
    <location>
        <position position="91"/>
    </location>
    <ligand>
        <name>S-adenosyl-L-methionine</name>
        <dbReference type="ChEBI" id="CHEBI:59789"/>
    </ligand>
</feature>
<feature type="binding site" evidence="1">
    <location>
        <position position="113"/>
    </location>
    <ligand>
        <name>S-adenosyl-L-methionine</name>
        <dbReference type="ChEBI" id="CHEBI:59789"/>
    </ligand>
</feature>
<comment type="function">
    <text evidence="1">Specifically dimethylates two adjacent adenosines (A1518 and A1519) in the loop of a conserved hairpin near the 3'-end of 16S rRNA in the 30S particle. May play a critical role in biogenesis of 30S subunits.</text>
</comment>
<comment type="catalytic activity">
    <reaction evidence="1">
        <text>adenosine(1518)/adenosine(1519) in 16S rRNA + 4 S-adenosyl-L-methionine = N(6)-dimethyladenosine(1518)/N(6)-dimethyladenosine(1519) in 16S rRNA + 4 S-adenosyl-L-homocysteine + 4 H(+)</text>
        <dbReference type="Rhea" id="RHEA:19609"/>
        <dbReference type="Rhea" id="RHEA-COMP:10232"/>
        <dbReference type="Rhea" id="RHEA-COMP:10233"/>
        <dbReference type="ChEBI" id="CHEBI:15378"/>
        <dbReference type="ChEBI" id="CHEBI:57856"/>
        <dbReference type="ChEBI" id="CHEBI:59789"/>
        <dbReference type="ChEBI" id="CHEBI:74411"/>
        <dbReference type="ChEBI" id="CHEBI:74493"/>
        <dbReference type="EC" id="2.1.1.182"/>
    </reaction>
</comment>
<comment type="subcellular location">
    <subcellularLocation>
        <location evidence="1">Cytoplasm</location>
    </subcellularLocation>
</comment>
<comment type="similarity">
    <text evidence="1">Belongs to the class I-like SAM-binding methyltransferase superfamily. rRNA adenine N(6)-methyltransferase family. RsmA subfamily.</text>
</comment>